<accession>Q7RTU4</accession>
<accession>A8MSH6</accession>
<feature type="chain" id="PRO_0000341377" description="Class A basic helix-loop-helix protein 9">
    <location>
        <begin position="1"/>
        <end position="235"/>
    </location>
</feature>
<feature type="domain" description="bHLH" evidence="1">
    <location>
        <begin position="65"/>
        <end position="117"/>
    </location>
</feature>
<feature type="region of interest" description="Disordered" evidence="2">
    <location>
        <begin position="1"/>
        <end position="69"/>
    </location>
</feature>
<feature type="region of interest" description="Disordered" evidence="2">
    <location>
        <begin position="132"/>
        <end position="235"/>
    </location>
</feature>
<feature type="compositionally biased region" description="Basic residues" evidence="2">
    <location>
        <begin position="55"/>
        <end position="67"/>
    </location>
</feature>
<feature type="sequence variant" id="VAR_073333" description="In MSSD; completely abolishes the transcription activation with the dimerization partners TCF3, TCF4 and TCF12; dbSNP:rs672601337." evidence="4">
    <original>N</original>
    <variation>D</variation>
    <location>
        <position position="71"/>
    </location>
</feature>
<feature type="sequence variant" id="VAR_073334" description="In MSSD; completely abolishes the transcription activation with the dimerization partners TCF3, TCF4 and TCF12; dbSNP:rs672601338." evidence="4">
    <original>R</original>
    <variation>P</variation>
    <location>
        <position position="73"/>
    </location>
</feature>
<feature type="sequence variant" id="VAR_077086" description="In CCSPD; uncertain significance; requires 2 nucleotide substitutions; dbSNP:rs886037856." evidence="5">
    <original>E</original>
    <variation>L</variation>
    <location>
        <position position="74"/>
    </location>
</feature>
<feature type="sequence variant" id="VAR_073335" description="In MSSD; completely abolishes the transcription activation with the dimerization partners TCF3, TCF4 and TCF12; dbSNP:rs672601339." evidence="4">
    <original>R</original>
    <variation>L</variation>
    <location>
        <position position="75"/>
    </location>
</feature>
<proteinExistence type="evidence at protein level"/>
<keyword id="KW-0963">Cytoplasm</keyword>
<keyword id="KW-0217">Developmental protein</keyword>
<keyword id="KW-0225">Disease variant</keyword>
<keyword id="KW-0238">DNA-binding</keyword>
<keyword id="KW-0539">Nucleus</keyword>
<keyword id="KW-1185">Reference proteome</keyword>
<keyword id="KW-0804">Transcription</keyword>
<keyword id="KW-0805">Transcription regulation</keyword>
<dbReference type="EMBL" id="AC032044">
    <property type="status" value="NOT_ANNOTATED_CDS"/>
    <property type="molecule type" value="Genomic_DNA"/>
</dbReference>
<dbReference type="EMBL" id="BK000140">
    <property type="protein sequence ID" value="DAA00302.1"/>
    <property type="status" value="ALT_INIT"/>
    <property type="molecule type" value="Genomic_DNA"/>
</dbReference>
<dbReference type="CCDS" id="CCDS45560.1"/>
<dbReference type="RefSeq" id="NP_001157877.1">
    <property type="nucleotide sequence ID" value="NM_001164405.2"/>
</dbReference>
<dbReference type="SMR" id="Q7RTU4"/>
<dbReference type="BioGRID" id="608299">
    <property type="interactions" value="12"/>
</dbReference>
<dbReference type="FunCoup" id="Q7RTU4">
    <property type="interactions" value="246"/>
</dbReference>
<dbReference type="IntAct" id="Q7RTU4">
    <property type="interactions" value="11"/>
</dbReference>
<dbReference type="STRING" id="9606.ENSP00000375248"/>
<dbReference type="iPTMnet" id="Q7RTU4"/>
<dbReference type="PhosphoSitePlus" id="Q7RTU4"/>
<dbReference type="BioMuta" id="BHLHA9"/>
<dbReference type="DMDM" id="190358730"/>
<dbReference type="jPOST" id="Q7RTU4"/>
<dbReference type="PaxDb" id="9606-ENSP00000375248"/>
<dbReference type="Antibodypedia" id="60610">
    <property type="antibodies" value="67 antibodies from 13 providers"/>
</dbReference>
<dbReference type="DNASU" id="727857"/>
<dbReference type="Ensembl" id="ENST00000391429.2">
    <property type="protein sequence ID" value="ENSP00000375248.1"/>
    <property type="gene ID" value="ENSG00000205899.4"/>
</dbReference>
<dbReference type="GeneID" id="727857"/>
<dbReference type="KEGG" id="hsa:727857"/>
<dbReference type="MANE-Select" id="ENST00000391429.2">
    <property type="protein sequence ID" value="ENSP00000375248.1"/>
    <property type="RefSeq nucleotide sequence ID" value="NM_001164405.2"/>
    <property type="RefSeq protein sequence ID" value="NP_001157877.1"/>
</dbReference>
<dbReference type="UCSC" id="uc021tnd.2">
    <property type="organism name" value="human"/>
</dbReference>
<dbReference type="AGR" id="HGNC:35126"/>
<dbReference type="CTD" id="727857"/>
<dbReference type="DisGeNET" id="727857"/>
<dbReference type="GeneCards" id="BHLHA9"/>
<dbReference type="HGNC" id="HGNC:35126">
    <property type="gene designation" value="BHLHA9"/>
</dbReference>
<dbReference type="HPA" id="ENSG00000205899">
    <property type="expression patterns" value="Not detected"/>
</dbReference>
<dbReference type="MalaCards" id="BHLHA9"/>
<dbReference type="MIM" id="607539">
    <property type="type" value="phenotype"/>
</dbReference>
<dbReference type="MIM" id="609432">
    <property type="type" value="phenotype"/>
</dbReference>
<dbReference type="MIM" id="612576">
    <property type="type" value="phenotype"/>
</dbReference>
<dbReference type="MIM" id="615416">
    <property type="type" value="gene"/>
</dbReference>
<dbReference type="neXtProt" id="NX_Q7RTU4"/>
<dbReference type="OpenTargets" id="ENSG00000205899"/>
<dbReference type="Orphanet" id="1986">
    <property type="disease" value="Gollop-Wolfgang complex"/>
</dbReference>
<dbReference type="Orphanet" id="157801">
    <property type="disease" value="Mesoaxial synostotic syndactyly with phalangeal reduction"/>
</dbReference>
<dbReference type="Orphanet" id="3329">
    <property type="disease" value="Tibial aplasia-ectrodactyly syndrome"/>
</dbReference>
<dbReference type="PharmGKB" id="PA164716602"/>
<dbReference type="VEuPathDB" id="HostDB:ENSG00000205899"/>
<dbReference type="eggNOG" id="ENOG502S6SC">
    <property type="taxonomic scope" value="Eukaryota"/>
</dbReference>
<dbReference type="GeneTree" id="ENSGT00390000002453"/>
<dbReference type="HOGENOM" id="CLU_093878_0_0_1"/>
<dbReference type="InParanoid" id="Q7RTU4"/>
<dbReference type="OMA" id="GNWRRCP"/>
<dbReference type="OrthoDB" id="6241467at2759"/>
<dbReference type="PAN-GO" id="Q7RTU4">
    <property type="GO annotations" value="4 GO annotations based on evolutionary models"/>
</dbReference>
<dbReference type="PhylomeDB" id="Q7RTU4"/>
<dbReference type="TreeFam" id="TF337642"/>
<dbReference type="PathwayCommons" id="Q7RTU4"/>
<dbReference type="SignaLink" id="Q7RTU4"/>
<dbReference type="BioGRID-ORCS" id="727857">
    <property type="hits" value="14 hits in 1159 CRISPR screens"/>
</dbReference>
<dbReference type="GeneWiki" id="BHLHA9"/>
<dbReference type="GenomeRNAi" id="727857"/>
<dbReference type="Pharos" id="Q7RTU4">
    <property type="development level" value="Tbio"/>
</dbReference>
<dbReference type="PRO" id="PR:Q7RTU4"/>
<dbReference type="Proteomes" id="UP000005640">
    <property type="component" value="Chromosome 17"/>
</dbReference>
<dbReference type="RNAct" id="Q7RTU4">
    <property type="molecule type" value="protein"/>
</dbReference>
<dbReference type="Bgee" id="ENSG00000205899">
    <property type="expression patterns" value="Expressed in primordial germ cell in gonad and 20 other cell types or tissues"/>
</dbReference>
<dbReference type="GO" id="GO:0000785">
    <property type="term" value="C:chromatin"/>
    <property type="evidence" value="ECO:0000247"/>
    <property type="project" value="NTNU_SB"/>
</dbReference>
<dbReference type="GO" id="GO:0005737">
    <property type="term" value="C:cytoplasm"/>
    <property type="evidence" value="ECO:0000314"/>
    <property type="project" value="UniProtKB"/>
</dbReference>
<dbReference type="GO" id="GO:0005634">
    <property type="term" value="C:nucleus"/>
    <property type="evidence" value="ECO:0007669"/>
    <property type="project" value="UniProtKB-SubCell"/>
</dbReference>
<dbReference type="GO" id="GO:0000981">
    <property type="term" value="F:DNA-binding transcription factor activity, RNA polymerase II-specific"/>
    <property type="evidence" value="ECO:0000247"/>
    <property type="project" value="NTNU_SB"/>
</dbReference>
<dbReference type="GO" id="GO:0046982">
    <property type="term" value="F:protein heterodimerization activity"/>
    <property type="evidence" value="ECO:0000314"/>
    <property type="project" value="UniProtKB"/>
</dbReference>
<dbReference type="GO" id="GO:0000977">
    <property type="term" value="F:RNA polymerase II transcription regulatory region sequence-specific DNA binding"/>
    <property type="evidence" value="ECO:0000318"/>
    <property type="project" value="GO_Central"/>
</dbReference>
<dbReference type="GO" id="GO:0032502">
    <property type="term" value="P:developmental process"/>
    <property type="evidence" value="ECO:0000318"/>
    <property type="project" value="GO_Central"/>
</dbReference>
<dbReference type="GO" id="GO:0006357">
    <property type="term" value="P:regulation of transcription by RNA polymerase II"/>
    <property type="evidence" value="ECO:0000318"/>
    <property type="project" value="GO_Central"/>
</dbReference>
<dbReference type="CDD" id="cd18912">
    <property type="entry name" value="bHLH_TS_bHLHa9"/>
    <property type="match status" value="1"/>
</dbReference>
<dbReference type="FunFam" id="4.10.280.10:FF:000084">
    <property type="entry name" value="class A basic helix-loop-helix protein 9"/>
    <property type="match status" value="1"/>
</dbReference>
<dbReference type="Gene3D" id="4.10.280.10">
    <property type="entry name" value="Helix-loop-helix DNA-binding domain"/>
    <property type="match status" value="1"/>
</dbReference>
<dbReference type="InterPro" id="IPR011598">
    <property type="entry name" value="bHLH_dom"/>
</dbReference>
<dbReference type="InterPro" id="IPR050283">
    <property type="entry name" value="E-box_TF_Regulators"/>
</dbReference>
<dbReference type="InterPro" id="IPR036638">
    <property type="entry name" value="HLH_DNA-bd_sf"/>
</dbReference>
<dbReference type="PANTHER" id="PTHR23349">
    <property type="entry name" value="BASIC HELIX-LOOP-HELIX TRANSCRIPTION FACTOR, TWIST"/>
    <property type="match status" value="1"/>
</dbReference>
<dbReference type="PANTHER" id="PTHR23349:SF10">
    <property type="entry name" value="CLASS A BASIC HELIX-LOOP-HELIX PROTEIN 9"/>
    <property type="match status" value="1"/>
</dbReference>
<dbReference type="Pfam" id="PF00010">
    <property type="entry name" value="HLH"/>
    <property type="match status" value="1"/>
</dbReference>
<dbReference type="SMART" id="SM00353">
    <property type="entry name" value="HLH"/>
    <property type="match status" value="1"/>
</dbReference>
<dbReference type="SUPFAM" id="SSF47459">
    <property type="entry name" value="HLH, helix-loop-helix DNA-binding domain"/>
    <property type="match status" value="1"/>
</dbReference>
<dbReference type="PROSITE" id="PS50888">
    <property type="entry name" value="BHLH"/>
    <property type="match status" value="1"/>
</dbReference>
<evidence type="ECO:0000255" key="1">
    <source>
        <dbReference type="PROSITE-ProRule" id="PRU00981"/>
    </source>
</evidence>
<evidence type="ECO:0000256" key="2">
    <source>
        <dbReference type="SAM" id="MobiDB-lite"/>
    </source>
</evidence>
<evidence type="ECO:0000269" key="3">
    <source>
    </source>
</evidence>
<evidence type="ECO:0000269" key="4">
    <source>
    </source>
</evidence>
<evidence type="ECO:0000269" key="5">
    <source>
    </source>
</evidence>
<evidence type="ECO:0000305" key="6"/>
<gene>
    <name type="primary">BHLHA9</name>
    <name type="synonym">BHLHF42</name>
</gene>
<name>BHA09_HUMAN</name>
<sequence>MLRGAPGLGLTARKGAEDSAEDLGGPCPEPGGDSGVLGANGASCSRGEAEEPAGRRRARPVRSKARRMAANVRERKRILDYNEAFNALRRALRHDLGGKRLSKIATLRRAIHRIAALSLVLRASPAPRGPCGHLECHGPAARGDTGDTGASPPPPAGPSLARPDAARPSVPSAPRCASCPPHAPLARPSAVAEGPGLAQASGGSWRRCPGASSAGPPPWPRGYLRSAPGMGHPRS</sequence>
<comment type="function">
    <text evidence="3 4">Transcription factor, which play a role in limb development. Is an essential player in the regulatory network governing transcription of genes implicated in limb morphogenesis.</text>
</comment>
<comment type="subunit">
    <text evidence="4">Heterodimer (PubMed:25466284). Efficient DNA binding requires dimerization with another bHLH protein. Interacts with TCF3, TCF4, and TCF12 (PubMed:25466284).</text>
</comment>
<comment type="interaction">
    <interactant intactId="EBI-17508719">
        <id>Q7RTU4</id>
    </interactant>
    <interactant intactId="EBI-707714">
        <id>Q92843</id>
        <label>BCL2L2</label>
    </interactant>
    <organismsDiffer>false</organismsDiffer>
    <experiments>3</experiments>
</comment>
<comment type="interaction">
    <interactant intactId="EBI-17508719">
        <id>Q7RTU4</id>
    </interactant>
    <interactant intactId="EBI-5916454">
        <id>A6NEM1</id>
        <label>GOLGA6L9</label>
    </interactant>
    <organismsDiffer>false</organismsDiffer>
    <experiments>3</experiments>
</comment>
<comment type="interaction">
    <interactant intactId="EBI-17508719">
        <id>Q7RTU4</id>
    </interactant>
    <interactant intactId="EBI-2805604">
        <id>Q2KHM9</id>
        <label>KIAA0753</label>
    </interactant>
    <organismsDiffer>false</organismsDiffer>
    <experiments>3</experiments>
</comment>
<comment type="interaction">
    <interactant intactId="EBI-17508719">
        <id>Q7RTU4</id>
    </interactant>
    <interactant intactId="EBI-948001">
        <id>Q15323</id>
        <label>KRT31</label>
    </interactant>
    <organismsDiffer>false</organismsDiffer>
    <experiments>3</experiments>
</comment>
<comment type="interaction">
    <interactant intactId="EBI-17508719">
        <id>Q7RTU4</id>
    </interactant>
    <interactant intactId="EBI-348259">
        <id>Q96EZ8</id>
        <label>MCRS1</label>
    </interactant>
    <organismsDiffer>false</organismsDiffer>
    <experiments>3</experiments>
</comment>
<comment type="interaction">
    <interactant intactId="EBI-17508719">
        <id>Q7RTU4</id>
    </interactant>
    <interactant intactId="EBI-11956853">
        <id>Q8N987</id>
        <label>NECAB1</label>
    </interactant>
    <organismsDiffer>false</organismsDiffer>
    <experiments>3</experiments>
</comment>
<comment type="interaction">
    <interactant intactId="EBI-17508719">
        <id>Q7RTU4</id>
    </interactant>
    <interactant intactId="EBI-12219503">
        <id>P01189</id>
        <label>POMC</label>
    </interactant>
    <organismsDiffer>false</organismsDiffer>
    <experiments>3</experiments>
</comment>
<comment type="interaction">
    <interactant intactId="EBI-17508719">
        <id>Q7RTU4</id>
    </interactant>
    <interactant intactId="EBI-721802">
        <id>Q9BZL4</id>
        <label>PPP1R12C</label>
    </interactant>
    <organismsDiffer>false</organismsDiffer>
    <experiments>3</experiments>
</comment>
<comment type="interaction">
    <interactant intactId="EBI-17508719">
        <id>Q7RTU4</id>
    </interactant>
    <interactant intactId="EBI-711613">
        <id>P21673</id>
        <label>SAT1</label>
    </interactant>
    <organismsDiffer>false</organismsDiffer>
    <experiments>3</experiments>
</comment>
<comment type="interaction">
    <interactant intactId="EBI-17508719">
        <id>Q7RTU4</id>
    </interactant>
    <interactant intactId="EBI-749295">
        <id>O75716</id>
        <label>STK16</label>
    </interactant>
    <organismsDiffer>false</organismsDiffer>
    <experiments>3</experiments>
</comment>
<comment type="interaction">
    <interactant intactId="EBI-17508719">
        <id>Q7RTU4</id>
    </interactant>
    <interactant intactId="EBI-1105213">
        <id>Q9UBB9</id>
        <label>TFIP11</label>
    </interactant>
    <organismsDiffer>false</organismsDiffer>
    <experiments>3</experiments>
</comment>
<comment type="subcellular location">
    <subcellularLocation>
        <location evidence="1">Nucleus</location>
    </subcellularLocation>
    <subcellularLocation>
        <location evidence="4">Cytoplasm</location>
    </subcellularLocation>
</comment>
<comment type="disease" evidence="3">
    <disease id="DI-03954">
        <name>Split-hand/foot malformation with long bone deficiency 3</name>
        <acronym>SHFLD3</acronym>
        <description>A disease characterized by the association of split-hand/foot malformation with long bone deficiency involving the tibia and fibula. Split-hand/foot malformation is a limb malformation involving the central rays of the autopod. Phenotypic expression is extremely variable between and within families, and even between limbs of a single patient, ranging from syndactyly and oligodactyly to the most severe monodactyly with only a single phalanx. Limb features include median clefts of the hands and feet, and aplasia and/or hypoplasia of the phalanges, metacarpals, and metatarsals.</description>
        <dbReference type="MIM" id="612576"/>
    </disease>
    <text evidence="3">Disease susceptibility may be associated with variants affecting the gene represented in this entry. A copy number variation (CNV) resulting in BHLHA9 duplications is a necessary but not sufficient susceptibility factor for Split-hand/foot malformation with long bone deficiency, a highly variable phenotype with reduced penetrance, particularly in females (PubMed:22147889).</text>
</comment>
<comment type="disease" evidence="4">
    <disease id="DI-04323">
        <name>Syndactyly, mesoaxial synostotic, with phalangeal reduction</name>
        <acronym>MSSD</acronym>
        <description>An autosomal recessive, non-syndromic digit anomaly characterized by mesoaxial osseous synostosis at a metacarpal level, reduction of one or more phalanges, hypoplasia of distal phalanges of preaxial and postaxial digits, clinodactyly of fifth fingers, and preaxial fusion of toes.</description>
        <dbReference type="MIM" id="609432"/>
    </disease>
    <text>The disease is caused by variants affecting the gene represented in this entry.</text>
</comment>
<comment type="disease" evidence="5">
    <disease id="DI-04787">
        <name>Camptosynpolydactyly, complex</name>
        <acronym>CCSPD</acronym>
        <description>An autosomal recessive disorder characterized by hand and foot deformities consisting of polydactyly with digits arising from the dorsum of hands, syn- and camptodactyly of some fingers, soft tissue syndactyly of first and second toes, and dysplastic nails.</description>
        <dbReference type="MIM" id="607539"/>
    </disease>
    <text>The disease may be caused by variants affecting the gene represented in this entry.</text>
</comment>
<comment type="sequence caution" evidence="6">
    <conflict type="erroneous initiation">
        <sequence resource="EMBL-CDS" id="DAA00302"/>
    </conflict>
    <text>Extended N-terminus.</text>
</comment>
<protein>
    <recommendedName>
        <fullName>Class A basic helix-loop-helix protein 9</fullName>
        <shortName>bHLHa9</shortName>
    </recommendedName>
    <alternativeName>
        <fullName>Class F basic helix-loop-helix factor 42</fullName>
        <shortName>bHLHf42</shortName>
    </alternativeName>
</protein>
<reference key="1">
    <citation type="journal article" date="2006" name="Nature">
        <title>DNA sequence of human chromosome 17 and analysis of rearrangement in the human lineage.</title>
        <authorList>
            <person name="Zody M.C."/>
            <person name="Garber M."/>
            <person name="Adams D.J."/>
            <person name="Sharpe T."/>
            <person name="Harrow J."/>
            <person name="Lupski J.R."/>
            <person name="Nicholson C."/>
            <person name="Searle S.M."/>
            <person name="Wilming L."/>
            <person name="Young S.K."/>
            <person name="Abouelleil A."/>
            <person name="Allen N.R."/>
            <person name="Bi W."/>
            <person name="Bloom T."/>
            <person name="Borowsky M.L."/>
            <person name="Bugalter B.E."/>
            <person name="Butler J."/>
            <person name="Chang J.L."/>
            <person name="Chen C.-K."/>
            <person name="Cook A."/>
            <person name="Corum B."/>
            <person name="Cuomo C.A."/>
            <person name="de Jong P.J."/>
            <person name="DeCaprio D."/>
            <person name="Dewar K."/>
            <person name="FitzGerald M."/>
            <person name="Gilbert J."/>
            <person name="Gibson R."/>
            <person name="Gnerre S."/>
            <person name="Goldstein S."/>
            <person name="Grafham D.V."/>
            <person name="Grocock R."/>
            <person name="Hafez N."/>
            <person name="Hagopian D.S."/>
            <person name="Hart E."/>
            <person name="Norman C.H."/>
            <person name="Humphray S."/>
            <person name="Jaffe D.B."/>
            <person name="Jones M."/>
            <person name="Kamal M."/>
            <person name="Khodiyar V.K."/>
            <person name="LaButti K."/>
            <person name="Laird G."/>
            <person name="Lehoczky J."/>
            <person name="Liu X."/>
            <person name="Lokyitsang T."/>
            <person name="Loveland J."/>
            <person name="Lui A."/>
            <person name="Macdonald P."/>
            <person name="Major J.E."/>
            <person name="Matthews L."/>
            <person name="Mauceli E."/>
            <person name="McCarroll S.A."/>
            <person name="Mihalev A.H."/>
            <person name="Mudge J."/>
            <person name="Nguyen C."/>
            <person name="Nicol R."/>
            <person name="O'Leary S.B."/>
            <person name="Osoegawa K."/>
            <person name="Schwartz D.C."/>
            <person name="Shaw-Smith C."/>
            <person name="Stankiewicz P."/>
            <person name="Steward C."/>
            <person name="Swarbreck D."/>
            <person name="Venkataraman V."/>
            <person name="Whittaker C.A."/>
            <person name="Yang X."/>
            <person name="Zimmer A.R."/>
            <person name="Bradley A."/>
            <person name="Hubbard T."/>
            <person name="Birren B.W."/>
            <person name="Rogers J."/>
            <person name="Lander E.S."/>
            <person name="Nusbaum C."/>
        </authorList>
    </citation>
    <scope>NUCLEOTIDE SEQUENCE [LARGE SCALE GENOMIC DNA]</scope>
</reference>
<reference key="2">
    <citation type="journal article" date="2002" name="Mech. Dev.">
        <title>Exhaustive identification of human class II basic helix-loop-helix proteins by virtual library screening.</title>
        <authorList>
            <person name="McLellan A.S."/>
            <person name="Langlands K."/>
            <person name="Kealey T."/>
        </authorList>
    </citation>
    <scope>IDENTIFICATION</scope>
</reference>
<reference key="3">
    <citation type="journal article" date="2012" name="J. Med. Genet.">
        <title>Duplications of BHLHA9 are associated with ectrodactyly and tibia hemimelia inherited in non-Mendelian fashion.</title>
        <authorList>
            <person name="Klopocki E."/>
            <person name="Lohan S."/>
            <person name="Doelken S.C."/>
            <person name="Stricker S."/>
            <person name="Ockeloen C.W."/>
            <person name="Soares Thiele de Aguiar R."/>
            <person name="Lezirovitz K."/>
            <person name="Mingroni Netto R.C."/>
            <person name="Jamsheer A."/>
            <person name="Shah H."/>
            <person name="Kurth I."/>
            <person name="Habenicht R."/>
            <person name="Warman M."/>
            <person name="Devriendt K."/>
            <person name="Kordass U."/>
            <person name="Hempel M."/>
            <person name="Rajab A."/>
            <person name="Makitie O."/>
            <person name="Naveed M."/>
            <person name="Radhakrishna U."/>
            <person name="Antonarakis S.E."/>
            <person name="Horn D."/>
            <person name="Mundlos S."/>
        </authorList>
    </citation>
    <scope>FUNCTION</scope>
    <scope>INVOLVEMENT IN SHFLD3</scope>
</reference>
<reference key="4">
    <citation type="journal article" date="2014" name="Am. J. Hum. Genet.">
        <title>Mutations affecting the BHLHA9 DNA-binding domain cause MSSD, mesoaxial synostotic syndactyly with phalangeal reduction, Malik-Percin type.</title>
        <authorList>
            <person name="Malik S."/>
            <person name="Percin F.E."/>
            <person name="Bornholdt D."/>
            <person name="Albrecht B."/>
            <person name="Percesepe A."/>
            <person name="Koch M.C."/>
            <person name="Landi A."/>
            <person name="Fritz B."/>
            <person name="Khan R."/>
            <person name="Mumtaz S."/>
            <person name="Akarsu N.A."/>
            <person name="Grzeschik K.H."/>
        </authorList>
    </citation>
    <scope>SUBCELLULAR LOCATION</scope>
    <scope>FUNCTION</scope>
    <scope>SUBUNIT</scope>
    <scope>INTERACTION WITH TCF3; TCF4 AND TCF12</scope>
    <scope>INVOLVEMENT IN MSDD</scope>
    <scope>VARIANTS MSSD ASP-71; PRO-73 AND LEU-75</scope>
    <scope>CHARACTERIZATION OF VARIANTS MSSD ASP-71; PRO-73 AND LEU-75</scope>
</reference>
<reference key="5">
    <citation type="journal article" date="2016" name="Am. J. Med. Genet. A">
        <title>Complex Camptosynpolydactyly and Mesoaxial synostotic syndactyly with phalangeal reduction are allelic disorders.</title>
        <authorList>
            <person name="Phadke S.R."/>
            <person name="Kar A."/>
            <person name="Bhowmik A.D."/>
            <person name="Dalal A."/>
        </authorList>
    </citation>
    <scope>POSSIBLE INVOLVEMENT IN CCSPD</scope>
    <scope>VARIANT CCSPD LEU-74</scope>
</reference>
<organism>
    <name type="scientific">Homo sapiens</name>
    <name type="common">Human</name>
    <dbReference type="NCBI Taxonomy" id="9606"/>
    <lineage>
        <taxon>Eukaryota</taxon>
        <taxon>Metazoa</taxon>
        <taxon>Chordata</taxon>
        <taxon>Craniata</taxon>
        <taxon>Vertebrata</taxon>
        <taxon>Euteleostomi</taxon>
        <taxon>Mammalia</taxon>
        <taxon>Eutheria</taxon>
        <taxon>Euarchontoglires</taxon>
        <taxon>Primates</taxon>
        <taxon>Haplorrhini</taxon>
        <taxon>Catarrhini</taxon>
        <taxon>Hominidae</taxon>
        <taxon>Homo</taxon>
    </lineage>
</organism>